<organism>
    <name type="scientific">Erwinia tasmaniensis (strain DSM 17950 / CFBP 7177 / CIP 109463 / NCPPB 4357 / Et1/99)</name>
    <dbReference type="NCBI Taxonomy" id="465817"/>
    <lineage>
        <taxon>Bacteria</taxon>
        <taxon>Pseudomonadati</taxon>
        <taxon>Pseudomonadota</taxon>
        <taxon>Gammaproteobacteria</taxon>
        <taxon>Enterobacterales</taxon>
        <taxon>Erwiniaceae</taxon>
        <taxon>Erwinia</taxon>
    </lineage>
</organism>
<proteinExistence type="inferred from homology"/>
<dbReference type="EMBL" id="CU468135">
    <property type="protein sequence ID" value="CAO98214.1"/>
    <property type="molecule type" value="Genomic_DNA"/>
</dbReference>
<dbReference type="RefSeq" id="WP_004160604.1">
    <property type="nucleotide sequence ID" value="NC_010694.1"/>
</dbReference>
<dbReference type="SMR" id="B2VK37"/>
<dbReference type="STRING" id="465817.ETA_31680"/>
<dbReference type="GeneID" id="97604560"/>
<dbReference type="KEGG" id="eta:ETA_31680"/>
<dbReference type="eggNOG" id="COG0049">
    <property type="taxonomic scope" value="Bacteria"/>
</dbReference>
<dbReference type="HOGENOM" id="CLU_072226_1_1_6"/>
<dbReference type="OrthoDB" id="9807653at2"/>
<dbReference type="Proteomes" id="UP000001726">
    <property type="component" value="Chromosome"/>
</dbReference>
<dbReference type="GO" id="GO:0015935">
    <property type="term" value="C:small ribosomal subunit"/>
    <property type="evidence" value="ECO:0007669"/>
    <property type="project" value="InterPro"/>
</dbReference>
<dbReference type="GO" id="GO:0019843">
    <property type="term" value="F:rRNA binding"/>
    <property type="evidence" value="ECO:0007669"/>
    <property type="project" value="UniProtKB-UniRule"/>
</dbReference>
<dbReference type="GO" id="GO:0003735">
    <property type="term" value="F:structural constituent of ribosome"/>
    <property type="evidence" value="ECO:0007669"/>
    <property type="project" value="InterPro"/>
</dbReference>
<dbReference type="GO" id="GO:0000049">
    <property type="term" value="F:tRNA binding"/>
    <property type="evidence" value="ECO:0007669"/>
    <property type="project" value="UniProtKB-UniRule"/>
</dbReference>
<dbReference type="GO" id="GO:0006412">
    <property type="term" value="P:translation"/>
    <property type="evidence" value="ECO:0007669"/>
    <property type="project" value="UniProtKB-UniRule"/>
</dbReference>
<dbReference type="CDD" id="cd14869">
    <property type="entry name" value="uS7_Bacteria"/>
    <property type="match status" value="1"/>
</dbReference>
<dbReference type="FunFam" id="1.10.455.10:FF:000001">
    <property type="entry name" value="30S ribosomal protein S7"/>
    <property type="match status" value="1"/>
</dbReference>
<dbReference type="Gene3D" id="1.10.455.10">
    <property type="entry name" value="Ribosomal protein S7 domain"/>
    <property type="match status" value="1"/>
</dbReference>
<dbReference type="HAMAP" id="MF_00480_B">
    <property type="entry name" value="Ribosomal_uS7_B"/>
    <property type="match status" value="1"/>
</dbReference>
<dbReference type="InterPro" id="IPR000235">
    <property type="entry name" value="Ribosomal_uS7"/>
</dbReference>
<dbReference type="InterPro" id="IPR005717">
    <property type="entry name" value="Ribosomal_uS7_bac/org-type"/>
</dbReference>
<dbReference type="InterPro" id="IPR020606">
    <property type="entry name" value="Ribosomal_uS7_CS"/>
</dbReference>
<dbReference type="InterPro" id="IPR023798">
    <property type="entry name" value="Ribosomal_uS7_dom"/>
</dbReference>
<dbReference type="InterPro" id="IPR036823">
    <property type="entry name" value="Ribosomal_uS7_dom_sf"/>
</dbReference>
<dbReference type="NCBIfam" id="TIGR01029">
    <property type="entry name" value="rpsG_bact"/>
    <property type="match status" value="1"/>
</dbReference>
<dbReference type="PANTHER" id="PTHR11205">
    <property type="entry name" value="RIBOSOMAL PROTEIN S7"/>
    <property type="match status" value="1"/>
</dbReference>
<dbReference type="Pfam" id="PF00177">
    <property type="entry name" value="Ribosomal_S7"/>
    <property type="match status" value="1"/>
</dbReference>
<dbReference type="PIRSF" id="PIRSF002122">
    <property type="entry name" value="RPS7p_RPS7a_RPS5e_RPS7o"/>
    <property type="match status" value="1"/>
</dbReference>
<dbReference type="SUPFAM" id="SSF47973">
    <property type="entry name" value="Ribosomal protein S7"/>
    <property type="match status" value="1"/>
</dbReference>
<dbReference type="PROSITE" id="PS00052">
    <property type="entry name" value="RIBOSOMAL_S7"/>
    <property type="match status" value="1"/>
</dbReference>
<accession>B2VK37</accession>
<name>RS7_ERWT9</name>
<reference key="1">
    <citation type="journal article" date="2008" name="Environ. Microbiol.">
        <title>The genome of Erwinia tasmaniensis strain Et1/99, a non-pathogenic bacterium in the genus Erwinia.</title>
        <authorList>
            <person name="Kube M."/>
            <person name="Migdoll A.M."/>
            <person name="Mueller I."/>
            <person name="Kuhl H."/>
            <person name="Beck A."/>
            <person name="Reinhardt R."/>
            <person name="Geider K."/>
        </authorList>
    </citation>
    <scope>NUCLEOTIDE SEQUENCE [LARGE SCALE GENOMIC DNA]</scope>
    <source>
        <strain>DSM 17950 / CFBP 7177 / CIP 109463 / NCPPB 4357 / Et1/99</strain>
    </source>
</reference>
<feature type="chain" id="PRO_1000125945" description="Small ribosomal subunit protein uS7">
    <location>
        <begin position="1"/>
        <end position="156"/>
    </location>
</feature>
<comment type="function">
    <text evidence="1">One of the primary rRNA binding proteins, it binds directly to 16S rRNA where it nucleates assembly of the head domain of the 30S subunit. Is located at the subunit interface close to the decoding center, probably blocks exit of the E-site tRNA.</text>
</comment>
<comment type="subunit">
    <text evidence="1">Part of the 30S ribosomal subunit. Contacts proteins S9 and S11.</text>
</comment>
<comment type="similarity">
    <text evidence="1">Belongs to the universal ribosomal protein uS7 family.</text>
</comment>
<sequence>MPRRRVIGQRKILPDPKFGSELLAKFVNILMVDGKKSTAETIVYNALETLAQRSGKNELEAFEVALDNVRPTVEVKSRRVGGSTYQVPVEVRPVRRNALAMRWIVEAARKRGDKSMALRLANELSDAAENKGTAVKKREDVHRMAEANKAFAHYRW</sequence>
<evidence type="ECO:0000255" key="1">
    <source>
        <dbReference type="HAMAP-Rule" id="MF_00480"/>
    </source>
</evidence>
<evidence type="ECO:0000305" key="2"/>
<gene>
    <name evidence="1" type="primary">rpsG</name>
    <name type="ordered locus">ETA_31680</name>
</gene>
<protein>
    <recommendedName>
        <fullName evidence="1">Small ribosomal subunit protein uS7</fullName>
    </recommendedName>
    <alternativeName>
        <fullName evidence="2">30S ribosomal protein S7</fullName>
    </alternativeName>
</protein>
<keyword id="KW-1185">Reference proteome</keyword>
<keyword id="KW-0687">Ribonucleoprotein</keyword>
<keyword id="KW-0689">Ribosomal protein</keyword>
<keyword id="KW-0694">RNA-binding</keyword>
<keyword id="KW-0699">rRNA-binding</keyword>
<keyword id="KW-0820">tRNA-binding</keyword>